<accession>Q4R7V1</accession>
<evidence type="ECO:0000250" key="1"/>
<evidence type="ECO:0000255" key="2"/>
<evidence type="ECO:0000256" key="3">
    <source>
        <dbReference type="SAM" id="MobiDB-lite"/>
    </source>
</evidence>
<sequence>MFPVAPKPQDSNQPSDRLMTEKQQEEAEWESINVLLMMHGLKPLSLVKRTDLKDLIIFDKQSSQRMRQNLKLLVEETSRQQNMIQELIETNQQLRNELQLEHSRATNQEQRANDLEQIMESVKSKIGELEDESLNRACQQQNKIKDLQKEQRTLQVKCQHYKKKRTEQQETIASLQTEVCRLRKEEEDRIVTQNRVFAYLCKRVPHTVLDRQLLCLIDYYESKIRKIHTQRQYKEDESQSEEENDYRSLDASPTYKGLLMSLQNQLKESNSQIDALLSEKLNLQKDSETRPTQHELRLYKQQVKKLEKALKKSVKLQELISPKKAEDTEKKDEPSKYNQQQALIDQRYFQVLCSINSIIHNPRAPVIIYKQSKGGAQNFNKDLIQDCGFEHLVPIIEMWADQLTSLKDLYKSLKTLSAELVPWHNLKKQDENEGIKVEDLLFIVDTMLEEVENKEKDSNMPNFQTLQAIVSHFQKLFDVPSLNGVYPRMNEVYTRLGEMNNAVRNLQELLELDSSSSLCVLVSTVGKLCRLINEDVNEQIMQVLGPEDLQSIIYKLEEHEEFFPAFQAFTNDLLEILEIDDLDAIVPAVKKLKVLSY</sequence>
<comment type="function">
    <text evidence="1">Plays a role in the organization of both preexisting and nascent microtubules in interphase cells. During mitosis, required for the organization and orientation of the mitotic spindle (By similarity).</text>
</comment>
<comment type="subunit">
    <text evidence="1">Directly interacts with tubulin-gamma; this interaction determines centrosomal localization.</text>
</comment>
<comment type="subcellular location">
    <subcellularLocation>
        <location evidence="1">Cytoplasm</location>
        <location evidence="1">Cytoskeleton</location>
        <location evidence="1">Microtubule organizing center</location>
        <location evidence="1">Centrosome</location>
    </subcellularLocation>
</comment>
<comment type="domain">
    <text evidence="1">The coiled-coil domains may be important for tubulin-gamma-binding and hence for centrosomal localization.</text>
</comment>
<dbReference type="EMBL" id="AB168710">
    <property type="protein sequence ID" value="BAE00821.1"/>
    <property type="molecule type" value="mRNA"/>
</dbReference>
<dbReference type="RefSeq" id="NP_001271696.1">
    <property type="nucleotide sequence ID" value="NM_001284767.1"/>
</dbReference>
<dbReference type="SMR" id="Q4R7V1"/>
<dbReference type="STRING" id="9541.ENSMFAP00000000959"/>
<dbReference type="eggNOG" id="ENOG502QS45">
    <property type="taxonomic scope" value="Eukaryota"/>
</dbReference>
<dbReference type="Proteomes" id="UP000233100">
    <property type="component" value="Unplaced"/>
</dbReference>
<dbReference type="GO" id="GO:0005813">
    <property type="term" value="C:centrosome"/>
    <property type="evidence" value="ECO:0007669"/>
    <property type="project" value="UniProtKB-SubCell"/>
</dbReference>
<dbReference type="GO" id="GO:0005737">
    <property type="term" value="C:cytoplasm"/>
    <property type="evidence" value="ECO:0007669"/>
    <property type="project" value="UniProtKB-KW"/>
</dbReference>
<dbReference type="GO" id="GO:0043015">
    <property type="term" value="F:gamma-tubulin binding"/>
    <property type="evidence" value="ECO:0007669"/>
    <property type="project" value="InterPro"/>
</dbReference>
<dbReference type="GO" id="GO:0060271">
    <property type="term" value="P:cilium assembly"/>
    <property type="evidence" value="ECO:0007669"/>
    <property type="project" value="InterPro"/>
</dbReference>
<dbReference type="GO" id="GO:0070507">
    <property type="term" value="P:regulation of microtubule cytoskeleton organization"/>
    <property type="evidence" value="ECO:0007669"/>
    <property type="project" value="InterPro"/>
</dbReference>
<dbReference type="InterPro" id="IPR037692">
    <property type="entry name" value="CEP70"/>
</dbReference>
<dbReference type="InterPro" id="IPR019734">
    <property type="entry name" value="TPR_rpt"/>
</dbReference>
<dbReference type="PANTHER" id="PTHR14594">
    <property type="entry name" value="CENTROSOMAL PROTEIN OF 70 KDA"/>
    <property type="match status" value="1"/>
</dbReference>
<dbReference type="PANTHER" id="PTHR14594:SF1">
    <property type="entry name" value="CENTROSOMAL PROTEIN OF 70 KDA"/>
    <property type="match status" value="1"/>
</dbReference>
<dbReference type="PROSITE" id="PS50005">
    <property type="entry name" value="TPR"/>
    <property type="match status" value="1"/>
</dbReference>
<dbReference type="PROSITE" id="PS50293">
    <property type="entry name" value="TPR_REGION"/>
    <property type="match status" value="1"/>
</dbReference>
<protein>
    <recommendedName>
        <fullName>Centrosomal protein of 70 kDa</fullName>
        <shortName>Cep70</shortName>
    </recommendedName>
</protein>
<feature type="chain" id="PRO_0000414855" description="Centrosomal protein of 70 kDa">
    <location>
        <begin position="1"/>
        <end position="597"/>
    </location>
</feature>
<feature type="repeat" description="TPR">
    <location>
        <begin position="483"/>
        <end position="516"/>
    </location>
</feature>
<feature type="region of interest" description="Disordered" evidence="3">
    <location>
        <begin position="1"/>
        <end position="24"/>
    </location>
</feature>
<feature type="coiled-coil region" evidence="2">
    <location>
        <begin position="66"/>
        <end position="179"/>
    </location>
</feature>
<feature type="coiled-coil region" evidence="2">
    <location>
        <begin position="254"/>
        <end position="320"/>
    </location>
</feature>
<reference key="1">
    <citation type="submission" date="2005-06" db="EMBL/GenBank/DDBJ databases">
        <title>DNA sequences of macaque genes expressed in brain or testis and its evolutionary implications.</title>
        <authorList>
            <consortium name="International consortium for macaque cDNA sequencing and analysis"/>
        </authorList>
    </citation>
    <scope>NUCLEOTIDE SEQUENCE [LARGE SCALE MRNA]</scope>
    <source>
        <tissue>Testis</tissue>
    </source>
</reference>
<proteinExistence type="evidence at transcript level"/>
<name>CEP70_MACFA</name>
<organism>
    <name type="scientific">Macaca fascicularis</name>
    <name type="common">Crab-eating macaque</name>
    <name type="synonym">Cynomolgus monkey</name>
    <dbReference type="NCBI Taxonomy" id="9541"/>
    <lineage>
        <taxon>Eukaryota</taxon>
        <taxon>Metazoa</taxon>
        <taxon>Chordata</taxon>
        <taxon>Craniata</taxon>
        <taxon>Vertebrata</taxon>
        <taxon>Euteleostomi</taxon>
        <taxon>Mammalia</taxon>
        <taxon>Eutheria</taxon>
        <taxon>Euarchontoglires</taxon>
        <taxon>Primates</taxon>
        <taxon>Haplorrhini</taxon>
        <taxon>Catarrhini</taxon>
        <taxon>Cercopithecidae</taxon>
        <taxon>Cercopithecinae</taxon>
        <taxon>Macaca</taxon>
    </lineage>
</organism>
<gene>
    <name type="primary">CEP70</name>
    <name type="ORF">QtsA-14318</name>
</gene>
<keyword id="KW-0175">Coiled coil</keyword>
<keyword id="KW-0963">Cytoplasm</keyword>
<keyword id="KW-0206">Cytoskeleton</keyword>
<keyword id="KW-1185">Reference proteome</keyword>
<keyword id="KW-0802">TPR repeat</keyword>